<comment type="function">
    <text evidence="1">The RuvA-RuvB-RuvC complex processes Holliday junction (HJ) DNA during genetic recombination and DNA repair. Endonuclease that resolves HJ intermediates. Cleaves cruciform DNA by making single-stranded nicks across the HJ at symmetrical positions within the homologous arms, yielding a 5'-phosphate and a 3'-hydroxyl group; requires a central core of homology in the junction. The consensus cleavage sequence is 5'-(A/T)TT(C/G)-3'. Cleavage occurs on the 3'-side of the TT dinucleotide at the point of strand exchange. HJ branch migration catalyzed by RuvA-RuvB allows RuvC to scan DNA until it finds its consensus sequence, where it cleaves and resolves the cruciform DNA.</text>
</comment>
<comment type="catalytic activity">
    <reaction evidence="1">
        <text>Endonucleolytic cleavage at a junction such as a reciprocal single-stranded crossover between two homologous DNA duplexes (Holliday junction).</text>
        <dbReference type="EC" id="3.1.21.10"/>
    </reaction>
</comment>
<comment type="cofactor">
    <cofactor evidence="1">
        <name>Mg(2+)</name>
        <dbReference type="ChEBI" id="CHEBI:18420"/>
    </cofactor>
    <text evidence="1">Binds 2 Mg(2+) ion per subunit.</text>
</comment>
<comment type="subunit">
    <text evidence="1">Homodimer which binds Holliday junction (HJ) DNA. The HJ becomes 2-fold symmetrical on binding to RuvC with unstacked arms; it has a different conformation from HJ DNA in complex with RuvA. In the full resolvosome a probable DNA-RuvA(4)-RuvB(12)-RuvC(2) complex forms which resolves the HJ.</text>
</comment>
<comment type="subcellular location">
    <subcellularLocation>
        <location evidence="1">Cytoplasm</location>
    </subcellularLocation>
</comment>
<comment type="similarity">
    <text evidence="1">Belongs to the RuvC family.</text>
</comment>
<organism>
    <name type="scientific">Thermotoga petrophila (strain ATCC BAA-488 / DSM 13995 / JCM 10881 / RKU-1)</name>
    <dbReference type="NCBI Taxonomy" id="390874"/>
    <lineage>
        <taxon>Bacteria</taxon>
        <taxon>Thermotogati</taxon>
        <taxon>Thermotogota</taxon>
        <taxon>Thermotogae</taxon>
        <taxon>Thermotogales</taxon>
        <taxon>Thermotogaceae</taxon>
        <taxon>Thermotoga</taxon>
    </lineage>
</organism>
<protein>
    <recommendedName>
        <fullName evidence="1">Crossover junction endodeoxyribonuclease RuvC</fullName>
        <ecNumber evidence="1">3.1.21.10</ecNumber>
    </recommendedName>
    <alternativeName>
        <fullName evidence="1">Holliday junction nuclease RuvC</fullName>
    </alternativeName>
    <alternativeName>
        <fullName evidence="1">Holliday junction resolvase RuvC</fullName>
    </alternativeName>
</protein>
<accession>A5IJJ9</accession>
<name>RUVC_THEP1</name>
<feature type="chain" id="PRO_1000002849" description="Crossover junction endodeoxyribonuclease RuvC">
    <location>
        <begin position="1"/>
        <end position="165"/>
    </location>
</feature>
<feature type="active site" evidence="1">
    <location>
        <position position="7"/>
    </location>
</feature>
<feature type="active site" evidence="1">
    <location>
        <position position="67"/>
    </location>
</feature>
<feature type="active site" evidence="1">
    <location>
        <position position="140"/>
    </location>
</feature>
<feature type="binding site" evidence="1">
    <location>
        <position position="7"/>
    </location>
    <ligand>
        <name>Mg(2+)</name>
        <dbReference type="ChEBI" id="CHEBI:18420"/>
        <label>1</label>
    </ligand>
</feature>
<feature type="binding site" evidence="1">
    <location>
        <position position="67"/>
    </location>
    <ligand>
        <name>Mg(2+)</name>
        <dbReference type="ChEBI" id="CHEBI:18420"/>
        <label>2</label>
    </ligand>
</feature>
<feature type="binding site" evidence="1">
    <location>
        <position position="140"/>
    </location>
    <ligand>
        <name>Mg(2+)</name>
        <dbReference type="ChEBI" id="CHEBI:18420"/>
        <label>1</label>
    </ligand>
</feature>
<proteinExistence type="inferred from homology"/>
<keyword id="KW-0963">Cytoplasm</keyword>
<keyword id="KW-0227">DNA damage</keyword>
<keyword id="KW-0233">DNA recombination</keyword>
<keyword id="KW-0234">DNA repair</keyword>
<keyword id="KW-0238">DNA-binding</keyword>
<keyword id="KW-0255">Endonuclease</keyword>
<keyword id="KW-0378">Hydrolase</keyword>
<keyword id="KW-0460">Magnesium</keyword>
<keyword id="KW-0479">Metal-binding</keyword>
<keyword id="KW-0540">Nuclease</keyword>
<dbReference type="EC" id="3.1.21.10" evidence="1"/>
<dbReference type="EMBL" id="CP000702">
    <property type="protein sequence ID" value="ABQ46372.1"/>
    <property type="molecule type" value="Genomic_DNA"/>
</dbReference>
<dbReference type="RefSeq" id="WP_011943007.1">
    <property type="nucleotide sequence ID" value="NC_009486.1"/>
</dbReference>
<dbReference type="SMR" id="A5IJJ9"/>
<dbReference type="STRING" id="390874.Tpet_0343"/>
<dbReference type="KEGG" id="tpt:Tpet_0343"/>
<dbReference type="eggNOG" id="COG0817">
    <property type="taxonomic scope" value="Bacteria"/>
</dbReference>
<dbReference type="HOGENOM" id="CLU_091257_3_1_0"/>
<dbReference type="Proteomes" id="UP000006558">
    <property type="component" value="Chromosome"/>
</dbReference>
<dbReference type="GO" id="GO:0005737">
    <property type="term" value="C:cytoplasm"/>
    <property type="evidence" value="ECO:0007669"/>
    <property type="project" value="UniProtKB-SubCell"/>
</dbReference>
<dbReference type="GO" id="GO:0048476">
    <property type="term" value="C:Holliday junction resolvase complex"/>
    <property type="evidence" value="ECO:0007669"/>
    <property type="project" value="UniProtKB-UniRule"/>
</dbReference>
<dbReference type="GO" id="GO:0008821">
    <property type="term" value="F:crossover junction DNA endonuclease activity"/>
    <property type="evidence" value="ECO:0007669"/>
    <property type="project" value="UniProtKB-UniRule"/>
</dbReference>
<dbReference type="GO" id="GO:0003677">
    <property type="term" value="F:DNA binding"/>
    <property type="evidence" value="ECO:0007669"/>
    <property type="project" value="UniProtKB-KW"/>
</dbReference>
<dbReference type="GO" id="GO:0000287">
    <property type="term" value="F:magnesium ion binding"/>
    <property type="evidence" value="ECO:0007669"/>
    <property type="project" value="UniProtKB-UniRule"/>
</dbReference>
<dbReference type="GO" id="GO:0006310">
    <property type="term" value="P:DNA recombination"/>
    <property type="evidence" value="ECO:0007669"/>
    <property type="project" value="UniProtKB-UniRule"/>
</dbReference>
<dbReference type="GO" id="GO:0006281">
    <property type="term" value="P:DNA repair"/>
    <property type="evidence" value="ECO:0007669"/>
    <property type="project" value="UniProtKB-UniRule"/>
</dbReference>
<dbReference type="CDD" id="cd16962">
    <property type="entry name" value="RuvC"/>
    <property type="match status" value="1"/>
</dbReference>
<dbReference type="FunFam" id="3.30.420.10:FF:000002">
    <property type="entry name" value="Crossover junction endodeoxyribonuclease RuvC"/>
    <property type="match status" value="1"/>
</dbReference>
<dbReference type="Gene3D" id="3.30.420.10">
    <property type="entry name" value="Ribonuclease H-like superfamily/Ribonuclease H"/>
    <property type="match status" value="1"/>
</dbReference>
<dbReference type="HAMAP" id="MF_00034">
    <property type="entry name" value="RuvC"/>
    <property type="match status" value="1"/>
</dbReference>
<dbReference type="InterPro" id="IPR012337">
    <property type="entry name" value="RNaseH-like_sf"/>
</dbReference>
<dbReference type="InterPro" id="IPR036397">
    <property type="entry name" value="RNaseH_sf"/>
</dbReference>
<dbReference type="InterPro" id="IPR020563">
    <property type="entry name" value="X-over_junc_endoDNase_Mg_BS"/>
</dbReference>
<dbReference type="InterPro" id="IPR002176">
    <property type="entry name" value="X-over_junc_endoDNase_RuvC"/>
</dbReference>
<dbReference type="NCBIfam" id="NF000711">
    <property type="entry name" value="PRK00039.2-1"/>
    <property type="match status" value="1"/>
</dbReference>
<dbReference type="NCBIfam" id="TIGR00228">
    <property type="entry name" value="ruvC"/>
    <property type="match status" value="1"/>
</dbReference>
<dbReference type="PANTHER" id="PTHR30194">
    <property type="entry name" value="CROSSOVER JUNCTION ENDODEOXYRIBONUCLEASE RUVC"/>
    <property type="match status" value="1"/>
</dbReference>
<dbReference type="PANTHER" id="PTHR30194:SF3">
    <property type="entry name" value="CROSSOVER JUNCTION ENDODEOXYRIBONUCLEASE RUVC"/>
    <property type="match status" value="1"/>
</dbReference>
<dbReference type="Pfam" id="PF02075">
    <property type="entry name" value="RuvC"/>
    <property type="match status" value="1"/>
</dbReference>
<dbReference type="PRINTS" id="PR00696">
    <property type="entry name" value="RSOLVASERUVC"/>
</dbReference>
<dbReference type="SUPFAM" id="SSF53098">
    <property type="entry name" value="Ribonuclease H-like"/>
    <property type="match status" value="1"/>
</dbReference>
<dbReference type="PROSITE" id="PS01321">
    <property type="entry name" value="RUVC"/>
    <property type="match status" value="1"/>
</dbReference>
<sequence length="165" mass="18356">MRILGVDPGYGIVGIGIIEVSGNRISHVFHGTIETPKDLPAEKRLKRIYEEFLKVLERFSPDECAMEKLFFVKNVTTAIGVGEARGVLLLALAEKNIPVFEYAPNEVKVSLSGYGRASKKQIQENIKRFLNLSEIPRPDDAADALAIAWCHALQSRARRVTHGEN</sequence>
<gene>
    <name evidence="1" type="primary">ruvC</name>
    <name type="ordered locus">Tpet_0343</name>
</gene>
<evidence type="ECO:0000255" key="1">
    <source>
        <dbReference type="HAMAP-Rule" id="MF_00034"/>
    </source>
</evidence>
<reference key="1">
    <citation type="submission" date="2007-05" db="EMBL/GenBank/DDBJ databases">
        <title>Complete sequence of Thermotoga petrophila RKU-1.</title>
        <authorList>
            <consortium name="US DOE Joint Genome Institute"/>
            <person name="Copeland A."/>
            <person name="Lucas S."/>
            <person name="Lapidus A."/>
            <person name="Barry K."/>
            <person name="Glavina del Rio T."/>
            <person name="Dalin E."/>
            <person name="Tice H."/>
            <person name="Pitluck S."/>
            <person name="Sims D."/>
            <person name="Brettin T."/>
            <person name="Bruce D."/>
            <person name="Detter J.C."/>
            <person name="Han C."/>
            <person name="Tapia R."/>
            <person name="Schmutz J."/>
            <person name="Larimer F."/>
            <person name="Land M."/>
            <person name="Hauser L."/>
            <person name="Kyrpides N."/>
            <person name="Mikhailova N."/>
            <person name="Nelson K."/>
            <person name="Gogarten J.P."/>
            <person name="Noll K."/>
            <person name="Richardson P."/>
        </authorList>
    </citation>
    <scope>NUCLEOTIDE SEQUENCE [LARGE SCALE GENOMIC DNA]</scope>
    <source>
        <strain>ATCC BAA-488 / DSM 13995 / JCM 10881 / RKU-1</strain>
    </source>
</reference>